<dbReference type="EMBL" id="J02482">
    <property type="protein sequence ID" value="AAA32576.1"/>
    <property type="molecule type" value="Genomic_DNA"/>
</dbReference>
<dbReference type="EMBL" id="Z35638">
    <property type="protein sequence ID" value="CAA84691.1"/>
    <property type="molecule type" value="Genomic_DNA"/>
</dbReference>
<dbReference type="PIR" id="A04247">
    <property type="entry name" value="ZEBPF4"/>
</dbReference>
<dbReference type="PDB" id="8G02">
    <property type="method" value="EM"/>
    <property type="resolution" value="3.50 A"/>
    <property type="chains" value="B/G=2-91"/>
</dbReference>
<dbReference type="PDBsum" id="8G02"/>
<dbReference type="EMDB" id="EMD-29642"/>
<dbReference type="SMR" id="P03639"/>
<dbReference type="TCDB" id="1.C.129.1.1">
    <property type="family name" value="the Phix174 lysis protein e (Phix174-e or phix174-e) family"/>
</dbReference>
<dbReference type="KEGG" id="vg:2546400"/>
<dbReference type="Proteomes" id="UP000005893">
    <property type="component" value="Segment"/>
</dbReference>
<dbReference type="GO" id="GO:0020002">
    <property type="term" value="C:host cell plasma membrane"/>
    <property type="evidence" value="ECO:0007669"/>
    <property type="project" value="UniProtKB-SubCell"/>
</dbReference>
<dbReference type="GO" id="GO:0016020">
    <property type="term" value="C:membrane"/>
    <property type="evidence" value="ECO:0007669"/>
    <property type="project" value="UniProtKB-KW"/>
</dbReference>
<dbReference type="GO" id="GO:0004857">
    <property type="term" value="F:enzyme inhibitor activity"/>
    <property type="evidence" value="ECO:0007669"/>
    <property type="project" value="InterPro"/>
</dbReference>
<dbReference type="GO" id="GO:0039635">
    <property type="term" value="P:symbiont-mediated suppression of host peptidoglycan biosynthetic process"/>
    <property type="evidence" value="ECO:0000314"/>
    <property type="project" value="CACAO"/>
</dbReference>
<dbReference type="GO" id="GO:0044659">
    <property type="term" value="P:viral release from host cell by cytolysis"/>
    <property type="evidence" value="ECO:0000314"/>
    <property type="project" value="CACAO"/>
</dbReference>
<dbReference type="GO" id="GO:0039640">
    <property type="term" value="P:viral release via suppression of host peptidoglycan biosynthetic process"/>
    <property type="evidence" value="ECO:0000314"/>
    <property type="project" value="UniProtKB"/>
</dbReference>
<dbReference type="InterPro" id="IPR007605">
    <property type="entry name" value="Micrvir_lysisE"/>
</dbReference>
<dbReference type="Pfam" id="PF04517">
    <property type="entry name" value="Microvir_lysis"/>
    <property type="match status" value="1"/>
</dbReference>
<reference key="1">
    <citation type="journal article" date="1977" name="Nature">
        <title>Nucleotide sequence of bacteriophage phi X174 DNA.</title>
        <authorList>
            <person name="Sanger F."/>
            <person name="Air G.M."/>
            <person name="Barrell B.G."/>
            <person name="Brown N.L."/>
            <person name="Coulson A.R."/>
            <person name="Fiddes J.C."/>
            <person name="Hutchison C.A. III"/>
            <person name="Slocombe P.M."/>
            <person name="Smith M."/>
        </authorList>
    </citation>
    <scope>NUCLEOTIDE SEQUENCE [GENOMIC DNA]</scope>
</reference>
<reference key="2">
    <citation type="journal article" date="1976" name="Nature">
        <title>Overlapping genes in bacteriophage phiX174.</title>
        <authorList>
            <person name="Barrell B.G."/>
            <person name="Air G.M."/>
            <person name="Hutchison C.A. III"/>
        </authorList>
    </citation>
    <scope>NUCLEOTIDE SEQUENCE [GENOMIC DNA]</scope>
</reference>
<reference evidence="11" key="3">
    <citation type="journal article" date="1995" name="Gene">
        <title>Positive-selection vector with enhanced lytic potential based on a variant of phi X174 phage gene E.</title>
        <authorList>
            <person name="Henrich B."/>
            <person name="Schmidtberger B."/>
        </authorList>
    </citation>
    <scope>NUCLEOTIDE SEQUENCE [GENOMIC DNA]</scope>
</reference>
<reference key="4">
    <citation type="journal article" date="1989" name="J. Biol. Chem.">
        <title>Evidence for membrane-bound oligomerization of bacteriophage phi X174 lysis protein-E.</title>
        <authorList>
            <person name="Blasi U."/>
            <person name="Linke R.P."/>
            <person name="Lubitz W."/>
        </authorList>
    </citation>
    <scope>SUBUNIT</scope>
</reference>
<reference key="5">
    <citation type="journal article" date="1997" name="Mol. Microbiol.">
        <title>Proline 21, a residue within the alpha-helical domain of phiX174 lysis protein E, is required for its function in Escherichia coli.</title>
        <authorList>
            <person name="Witte A."/>
            <person name="Schrot G."/>
            <person name="Schon P."/>
            <person name="Lubitz W."/>
        </authorList>
    </citation>
    <scope>MUTAGENESIS OF PRO-21</scope>
</reference>
<reference key="6">
    <citation type="journal article" date="2000" name="Proc. Natl. Acad. Sci. U.S.A.">
        <title>Genetic evidence that the bacteriophage phi X174 lysis protein inhibits cell wall synthesis.</title>
        <authorList>
            <person name="Bernhardt T.G."/>
            <person name="Roof W.D."/>
            <person name="Young R."/>
        </authorList>
    </citation>
    <scope>FUNCTION</scope>
</reference>
<reference key="7">
    <citation type="journal article" date="2001" name="J. Biol. Chem.">
        <title>The lysis protein E of phi X174 is a specific inhibitor of the MraY-catalyzed step in peptidoglycan synthesis.</title>
        <authorList>
            <person name="Bernhardt T.G."/>
            <person name="Struck D.K."/>
            <person name="Young R."/>
        </authorList>
    </citation>
    <scope>FUNCTION</scope>
</reference>
<reference key="8">
    <citation type="journal article" date="2006" name="Microbiology">
        <title>Interaction of the transmembrane domain of lysis protein E from bacteriophage phiX174 with bacterial translocase MraY and peptidyl-prolyl isomerase SlyD.</title>
        <authorList>
            <person name="Mendel S."/>
            <person name="Holbourn J.M."/>
            <person name="Schouten J.A."/>
            <person name="Bugg T.D."/>
        </authorList>
    </citation>
    <scope>INTERACTION WITH HOST SLYD</scope>
    <scope>INTERACTION WITH HOST AND MRAY</scope>
</reference>
<reference key="9">
    <citation type="journal article" date="2009" name="Biochemistry">
        <title>Purification and functional characterization of phiX174 lysis protein E.</title>
        <authorList>
            <person name="Zheng Y."/>
            <person name="Struck D.K."/>
            <person name="Young R."/>
        </authorList>
    </citation>
    <scope>FUNCTION</scope>
</reference>
<reference key="10">
    <citation type="journal article" date="2012" name="Mol. Microbiol.">
        <title>Minimal requirements for inhibition of MraY by lysis protein E from bacteriophage PhiX174.</title>
        <authorList>
            <person name="Tanaka S."/>
            <person name="Clemons W.M. Jr."/>
        </authorList>
    </citation>
    <scope>INTERACTION WITH HOST MRAY</scope>
    <scope>MUTAGENESIS OF ASP-8; ALA-11; PHE-12; LEU-18; LEU-19; LEU-20; LEU-23; MET-26 AND PHE-27</scope>
</reference>
<reference evidence="12" key="11">
    <citation type="journal article" date="2023" name="Science">
        <title>The mechanism of the phage-encoded protein antibiotic from PhiX174.</title>
        <authorList>
            <person name="Orta A.K."/>
            <person name="Riera N."/>
            <person name="Li Y.E."/>
            <person name="Tanaka S."/>
            <person name="Yun H.G."/>
            <person name="Klaic L."/>
            <person name="Clemons W.M. Jr."/>
        </authorList>
    </citation>
    <scope>STRUCTURE BY ELECTRON MICROSCOPY (3.50 ANGSTROMS) OF 2-91</scope>
    <scope>FUNCTION</scope>
    <scope>IDENTIFICATION IN THE YES COMPLEX</scope>
    <scope>MUTAGENESIS OF ASP-8; ALA-11; PHE-12; LEU-18; LEU-19; LEU-20; PRO-21; LEU-23; MET-26; PHE-27; PRO-29 AND LYS-46</scope>
    <scope>INTERACTION WITH HOST MRAY</scope>
    <scope>INTERACTION WITH HOST SLYD</scope>
</reference>
<accession>P03639</accession>
<protein>
    <recommendedName>
        <fullName>Lysis protein E</fullName>
        <shortName>Protein E</shortName>
    </recommendedName>
    <alternativeName>
        <fullName>GPE</fullName>
    </alternativeName>
</protein>
<keyword id="KW-0002">3D-structure</keyword>
<keyword id="KW-0204">Cytolysis</keyword>
<keyword id="KW-0578">Host cell lysis by virus</keyword>
<keyword id="KW-1032">Host cell membrane</keyword>
<keyword id="KW-1043">Host membrane</keyword>
<keyword id="KW-0945">Host-virus interaction</keyword>
<keyword id="KW-0472">Membrane</keyword>
<keyword id="KW-1185">Reference proteome</keyword>
<keyword id="KW-0812">Transmembrane</keyword>
<keyword id="KW-1133">Transmembrane helix</keyword>
<keyword id="KW-1188">Viral release from host cell</keyword>
<proteinExistence type="evidence at protein level"/>
<sequence length="91" mass="10574">MVRWTLWDTLAFLLLLSLLLPSLLIMFIPSTFKRPVSSWKALNLRKTLLMASSVRLKPLNCSRLPCVYAQETLTFLLTQKKTCVKNYVQKE</sequence>
<organism>
    <name type="scientific">Enterobacteria phage phiX174</name>
    <name type="common">Isolate Sanger</name>
    <name type="synonym">Bacteriophage phi-X174</name>
    <dbReference type="NCBI Taxonomy" id="1217068"/>
    <lineage>
        <taxon>Viruses</taxon>
        <taxon>Monodnaviria</taxon>
        <taxon>Sangervirae</taxon>
        <taxon>Phixviricota</taxon>
        <taxon>Malgrandaviricetes</taxon>
        <taxon>Petitvirales</taxon>
        <taxon>Microviridae</taxon>
        <taxon>Bullavirinae</taxon>
        <taxon>Sinsheimervirus</taxon>
        <taxon>Escherichia phage phiX174</taxon>
    </lineage>
</organism>
<organismHost>
    <name type="scientific">Escherichia coli C</name>
    <dbReference type="NCBI Taxonomy" id="498388"/>
</organismHost>
<feature type="chain" id="PRO_0000164885" description="Lysis protein E">
    <location>
        <begin position="1"/>
        <end position="91"/>
    </location>
</feature>
<feature type="topological domain" description="Periplasmic" evidence="9">
    <location>
        <begin position="1"/>
        <end position="8"/>
    </location>
</feature>
<feature type="transmembrane region" description="Helical" evidence="1">
    <location>
        <begin position="9"/>
        <end position="29"/>
    </location>
</feature>
<feature type="topological domain" description="Cytoplasmic" evidence="9">
    <location>
        <begin position="30"/>
        <end position="91"/>
    </location>
</feature>
<feature type="mutagenesis site" description="Delayed lysis onset." evidence="5">
    <original>D</original>
    <variation>A</variation>
    <location>
        <position position="8"/>
    </location>
</feature>
<feature type="mutagenesis site" description="Delayed lysis onset." evidence="5">
    <original>A</original>
    <variation>S</variation>
    <location>
        <position position="11"/>
    </location>
</feature>
<feature type="mutagenesis site" description="Delayed lysis onset." evidence="5">
    <original>F</original>
    <variation>A</variation>
    <location>
        <position position="12"/>
    </location>
</feature>
<feature type="mutagenesis site" description="Loss of ability to insert in the host membrane." evidence="5">
    <original>L</original>
    <variation>A</variation>
    <location>
        <position position="18"/>
    </location>
</feature>
<feature type="mutagenesis site" description="Delayed lysis onset." evidence="5">
    <original>L</original>
    <variation>A</variation>
    <location>
        <position position="19"/>
    </location>
</feature>
<feature type="mutagenesis site" description="Delayed lysis onset." evidence="5">
    <original>L</original>
    <variation>A</variation>
    <location>
        <position position="20"/>
    </location>
</feature>
<feature type="mutagenesis site" description="Loss of E-mediated host lysis." evidence="7 8">
    <original>P</original>
    <variation>A</variation>
    <location>
        <position position="21"/>
    </location>
</feature>
<feature type="mutagenesis site" description="Loss of E-mediated host lysis." evidence="8">
    <original>P</original>
    <variation>G</variation>
    <location>
        <position position="21"/>
    </location>
</feature>
<feature type="mutagenesis site" description="Loss of E-mediated host lysis." evidence="8">
    <original>P</original>
    <variation>S</variation>
    <location>
        <position position="21"/>
    </location>
</feature>
<feature type="mutagenesis site" description="Loss of E-mediated host lysis." evidence="8">
    <original>P</original>
    <variation>V</variation>
    <location>
        <position position="21"/>
    </location>
</feature>
<feature type="mutagenesis site" description="Delayed lysis onset." evidence="5">
    <original>L</original>
    <variation>A</variation>
    <location>
        <position position="23"/>
    </location>
</feature>
<feature type="mutagenesis site" description="Delayed lysis onset." evidence="5">
    <original>M</original>
    <variation>A</variation>
    <location>
        <position position="26"/>
    </location>
</feature>
<feature type="mutagenesis site" description="Delayed lysis onset." evidence="5">
    <original>F</original>
    <variation>A</variation>
    <location>
        <position position="27"/>
    </location>
</feature>
<feature type="mutagenesis site" description="Delayed lysis onset." evidence="5">
    <original>P</original>
    <variation>A</variation>
    <location>
        <position position="29"/>
    </location>
</feature>
<feature type="mutagenesis site" description="Delayed lysis onset." evidence="7">
    <original>K</original>
    <variation>A</variation>
    <location>
        <position position="46"/>
    </location>
</feature>
<feature type="sequence conflict" description="In Ref. 1; AAA32576 and 2; no nucleotide entry." ref="1 2">
    <original>Q</original>
    <variation>R</variation>
    <location>
        <position position="89"/>
    </location>
</feature>
<feature type="helix" evidence="13">
    <location>
        <begin position="6"/>
        <end position="24"/>
    </location>
</feature>
<feature type="turn" evidence="13">
    <location>
        <begin position="25"/>
        <end position="27"/>
    </location>
</feature>
<feature type="helix" evidence="13">
    <location>
        <begin position="30"/>
        <end position="33"/>
    </location>
</feature>
<feature type="helix" evidence="13">
    <location>
        <begin position="37"/>
        <end position="51"/>
    </location>
</feature>
<feature type="strand" evidence="13">
    <location>
        <begin position="56"/>
        <end position="58"/>
    </location>
</feature>
<comment type="function">
    <text evidence="2 3 4 7">Induces host cell lysis (PubMed:10760296, PubMed:11078734, PubMed:19379010, PubMed:37440661). Inhibits the host translocase MraY activity that catalyzes the synthesis of lipid I, a necessary step for the host cell wall biosynthesis (PubMed:11078734, PubMed:19379010, PubMed:37440661).</text>
</comment>
<comment type="subunit">
    <text evidence="5 6 7 10">Oligomerizes (PubMed:2466836). Interacts (via N-terminal) with host SlyD; this interaction protects E from proteolysis and stabilizes the YES complex (Probable) (PubMed:37440661). Interacts (via transmembrane region) with host MraY; this interaction inhibits MraY by blocking lipid access to the active site (Probable) (PubMed:22742425, PubMed:37440661). Part of the YES complex composed of 2 host Mray molecules, 2 lysis protein E molecules and 2 host SlyD molecules (PubMed:37440661).</text>
</comment>
<comment type="subcellular location">
    <subcellularLocation>
        <location evidence="9">Host cell membrane</location>
        <topology evidence="9">Single-pass type I membrane protein</topology>
    </subcellularLocation>
</comment>
<comment type="miscellaneous">
    <text evidence="9">Most of the references in this paper show that residue 89 is Arg, in most other phiX174 proteomes the residue is Gln. We have chosen to show Gln at this position.</text>
</comment>
<comment type="similarity">
    <text evidence="9">Belongs to the microvirus E protein family.</text>
</comment>
<name>LYS_BPPHS</name>
<evidence type="ECO:0000255" key="1"/>
<evidence type="ECO:0000269" key="2">
    <source>
    </source>
</evidence>
<evidence type="ECO:0000269" key="3">
    <source>
    </source>
</evidence>
<evidence type="ECO:0000269" key="4">
    <source>
    </source>
</evidence>
<evidence type="ECO:0000269" key="5">
    <source>
    </source>
</evidence>
<evidence type="ECO:0000269" key="6">
    <source>
    </source>
</evidence>
<evidence type="ECO:0000269" key="7">
    <source>
    </source>
</evidence>
<evidence type="ECO:0000269" key="8">
    <source>
    </source>
</evidence>
<evidence type="ECO:0000305" key="9"/>
<evidence type="ECO:0000305" key="10">
    <source>
    </source>
</evidence>
<evidence type="ECO:0000312" key="11">
    <source>
        <dbReference type="EMBL" id="CAA84691.1"/>
    </source>
</evidence>
<evidence type="ECO:0007744" key="12">
    <source>
        <dbReference type="PDB" id="8G02"/>
    </source>
</evidence>
<evidence type="ECO:0007829" key="13">
    <source>
        <dbReference type="PDB" id="8G02"/>
    </source>
</evidence>
<gene>
    <name type="primary">E</name>
</gene>